<sequence length="154" mass="17134">MAFLVALLVVLGLQLVQSNALTCHVCEAQNSYACSNPSQCPGEKKFCLLAVTRIFERFFYVSKQCTRRCPTPVVSPPSTNPPSEPKEFLIEKPMPFLFYKCCQWDSCNGEGPPTDQLLKEQPGKASGRRHRYIELLLTGFMVLTANGLSALCLL</sequence>
<feature type="signal peptide" evidence="3">
    <location>
        <begin position="1"/>
        <end position="20"/>
    </location>
</feature>
<feature type="chain" id="PRO_0000318201" description="Lymphocyte antigen 6K">
    <location>
        <begin position="21"/>
        <end position="123"/>
    </location>
</feature>
<feature type="propeptide" id="PRO_0000337086" description="Removed in mature form" evidence="3">
    <location>
        <begin position="124"/>
        <end position="154"/>
    </location>
</feature>
<feature type="domain" description="UPAR/Ly6">
    <location>
        <begin position="21"/>
        <end position="117"/>
    </location>
</feature>
<feature type="lipid moiety-binding region" description="GPI-anchor amidated glycine" evidence="3">
    <location>
        <position position="123"/>
    </location>
</feature>
<gene>
    <name evidence="9" type="primary">Ly6k</name>
</gene>
<evidence type="ECO:0000250" key="1"/>
<evidence type="ECO:0000250" key="2">
    <source>
        <dbReference type="UniProtKB" id="Q17RY6"/>
    </source>
</evidence>
<evidence type="ECO:0000255" key="3"/>
<evidence type="ECO:0000269" key="4">
    <source>
    </source>
</evidence>
<evidence type="ECO:0000269" key="5">
    <source>
    </source>
</evidence>
<evidence type="ECO:0000269" key="6">
    <source>
    </source>
</evidence>
<evidence type="ECO:0000269" key="7">
    <source>
    </source>
</evidence>
<evidence type="ECO:0000305" key="8"/>
<evidence type="ECO:0000312" key="9">
    <source>
        <dbReference type="MGI" id="MGI:1923736"/>
    </source>
</evidence>
<name>LY6K_MOUSE</name>
<reference key="1">
    <citation type="journal article" date="2005" name="Science">
        <title>The transcriptional landscape of the mammalian genome.</title>
        <authorList>
            <person name="Carninci P."/>
            <person name="Kasukawa T."/>
            <person name="Katayama S."/>
            <person name="Gough J."/>
            <person name="Frith M.C."/>
            <person name="Maeda N."/>
            <person name="Oyama R."/>
            <person name="Ravasi T."/>
            <person name="Lenhard B."/>
            <person name="Wells C."/>
            <person name="Kodzius R."/>
            <person name="Shimokawa K."/>
            <person name="Bajic V.B."/>
            <person name="Brenner S.E."/>
            <person name="Batalov S."/>
            <person name="Forrest A.R."/>
            <person name="Zavolan M."/>
            <person name="Davis M.J."/>
            <person name="Wilming L.G."/>
            <person name="Aidinis V."/>
            <person name="Allen J.E."/>
            <person name="Ambesi-Impiombato A."/>
            <person name="Apweiler R."/>
            <person name="Aturaliya R.N."/>
            <person name="Bailey T.L."/>
            <person name="Bansal M."/>
            <person name="Baxter L."/>
            <person name="Beisel K.W."/>
            <person name="Bersano T."/>
            <person name="Bono H."/>
            <person name="Chalk A.M."/>
            <person name="Chiu K.P."/>
            <person name="Choudhary V."/>
            <person name="Christoffels A."/>
            <person name="Clutterbuck D.R."/>
            <person name="Crowe M.L."/>
            <person name="Dalla E."/>
            <person name="Dalrymple B.P."/>
            <person name="de Bono B."/>
            <person name="Della Gatta G."/>
            <person name="di Bernardo D."/>
            <person name="Down T."/>
            <person name="Engstrom P."/>
            <person name="Fagiolini M."/>
            <person name="Faulkner G."/>
            <person name="Fletcher C.F."/>
            <person name="Fukushima T."/>
            <person name="Furuno M."/>
            <person name="Futaki S."/>
            <person name="Gariboldi M."/>
            <person name="Georgii-Hemming P."/>
            <person name="Gingeras T.R."/>
            <person name="Gojobori T."/>
            <person name="Green R.E."/>
            <person name="Gustincich S."/>
            <person name="Harbers M."/>
            <person name="Hayashi Y."/>
            <person name="Hensch T.K."/>
            <person name="Hirokawa N."/>
            <person name="Hill D."/>
            <person name="Huminiecki L."/>
            <person name="Iacono M."/>
            <person name="Ikeo K."/>
            <person name="Iwama A."/>
            <person name="Ishikawa T."/>
            <person name="Jakt M."/>
            <person name="Kanapin A."/>
            <person name="Katoh M."/>
            <person name="Kawasawa Y."/>
            <person name="Kelso J."/>
            <person name="Kitamura H."/>
            <person name="Kitano H."/>
            <person name="Kollias G."/>
            <person name="Krishnan S.P."/>
            <person name="Kruger A."/>
            <person name="Kummerfeld S.K."/>
            <person name="Kurochkin I.V."/>
            <person name="Lareau L.F."/>
            <person name="Lazarevic D."/>
            <person name="Lipovich L."/>
            <person name="Liu J."/>
            <person name="Liuni S."/>
            <person name="McWilliam S."/>
            <person name="Madan Babu M."/>
            <person name="Madera M."/>
            <person name="Marchionni L."/>
            <person name="Matsuda H."/>
            <person name="Matsuzawa S."/>
            <person name="Miki H."/>
            <person name="Mignone F."/>
            <person name="Miyake S."/>
            <person name="Morris K."/>
            <person name="Mottagui-Tabar S."/>
            <person name="Mulder N."/>
            <person name="Nakano N."/>
            <person name="Nakauchi H."/>
            <person name="Ng P."/>
            <person name="Nilsson R."/>
            <person name="Nishiguchi S."/>
            <person name="Nishikawa S."/>
            <person name="Nori F."/>
            <person name="Ohara O."/>
            <person name="Okazaki Y."/>
            <person name="Orlando V."/>
            <person name="Pang K.C."/>
            <person name="Pavan W.J."/>
            <person name="Pavesi G."/>
            <person name="Pesole G."/>
            <person name="Petrovsky N."/>
            <person name="Piazza S."/>
            <person name="Reed J."/>
            <person name="Reid J.F."/>
            <person name="Ring B.Z."/>
            <person name="Ringwald M."/>
            <person name="Rost B."/>
            <person name="Ruan Y."/>
            <person name="Salzberg S.L."/>
            <person name="Sandelin A."/>
            <person name="Schneider C."/>
            <person name="Schoenbach C."/>
            <person name="Sekiguchi K."/>
            <person name="Semple C.A."/>
            <person name="Seno S."/>
            <person name="Sessa L."/>
            <person name="Sheng Y."/>
            <person name="Shibata Y."/>
            <person name="Shimada H."/>
            <person name="Shimada K."/>
            <person name="Silva D."/>
            <person name="Sinclair B."/>
            <person name="Sperling S."/>
            <person name="Stupka E."/>
            <person name="Sugiura K."/>
            <person name="Sultana R."/>
            <person name="Takenaka Y."/>
            <person name="Taki K."/>
            <person name="Tammoja K."/>
            <person name="Tan S.L."/>
            <person name="Tang S."/>
            <person name="Taylor M.S."/>
            <person name="Tegner J."/>
            <person name="Teichmann S.A."/>
            <person name="Ueda H.R."/>
            <person name="van Nimwegen E."/>
            <person name="Verardo R."/>
            <person name="Wei C.L."/>
            <person name="Yagi K."/>
            <person name="Yamanishi H."/>
            <person name="Zabarovsky E."/>
            <person name="Zhu S."/>
            <person name="Zimmer A."/>
            <person name="Hide W."/>
            <person name="Bult C."/>
            <person name="Grimmond S.M."/>
            <person name="Teasdale R.D."/>
            <person name="Liu E.T."/>
            <person name="Brusic V."/>
            <person name="Quackenbush J."/>
            <person name="Wahlestedt C."/>
            <person name="Mattick J.S."/>
            <person name="Hume D.A."/>
            <person name="Kai C."/>
            <person name="Sasaki D."/>
            <person name="Tomaru Y."/>
            <person name="Fukuda S."/>
            <person name="Kanamori-Katayama M."/>
            <person name="Suzuki M."/>
            <person name="Aoki J."/>
            <person name="Arakawa T."/>
            <person name="Iida J."/>
            <person name="Imamura K."/>
            <person name="Itoh M."/>
            <person name="Kato T."/>
            <person name="Kawaji H."/>
            <person name="Kawagashira N."/>
            <person name="Kawashima T."/>
            <person name="Kojima M."/>
            <person name="Kondo S."/>
            <person name="Konno H."/>
            <person name="Nakano K."/>
            <person name="Ninomiya N."/>
            <person name="Nishio T."/>
            <person name="Okada M."/>
            <person name="Plessy C."/>
            <person name="Shibata K."/>
            <person name="Shiraki T."/>
            <person name="Suzuki S."/>
            <person name="Tagami M."/>
            <person name="Waki K."/>
            <person name="Watahiki A."/>
            <person name="Okamura-Oho Y."/>
            <person name="Suzuki H."/>
            <person name="Kawai J."/>
            <person name="Hayashizaki Y."/>
        </authorList>
    </citation>
    <scope>NUCLEOTIDE SEQUENCE [LARGE SCALE MRNA]</scope>
    <source>
        <strain>C57BL/6J</strain>
    </source>
</reference>
<reference key="2">
    <citation type="journal article" date="2004" name="Genome Res.">
        <title>The status, quality, and expansion of the NIH full-length cDNA project: the Mammalian Gene Collection (MGC).</title>
        <authorList>
            <consortium name="The MGC Project Team"/>
        </authorList>
    </citation>
    <scope>NUCLEOTIDE SEQUENCE [LARGE SCALE MRNA]</scope>
    <source>
        <tissue>Testis</tissue>
    </source>
</reference>
<reference key="3">
    <citation type="journal article" date="2008" name="Biochem. Biophys. Res. Commun.">
        <title>TEX101, a germ cell-marker glycoprotein, is associated with lymphocyte antigen 6 complex locus k within the mouse testis.</title>
        <authorList>
            <person name="Yoshitake H."/>
            <person name="Tsukamoto H."/>
            <person name="Maruyama-Fukushima M."/>
            <person name="Takamori K."/>
            <person name="Ogawa H."/>
            <person name="Araki Y."/>
        </authorList>
    </citation>
    <scope>SUBCELLULAR LOCATION</scope>
    <scope>INTERACTION WITH TEX101</scope>
</reference>
<reference key="4">
    <citation type="journal article" date="2010" name="Biochem. Biophys. Res. Commun.">
        <title>Molecular expression of Ly6k, a putative glycosylphosphatidyl-inositol-anchored membrane protein on the mouse testicular germ cells.</title>
        <authorList>
            <person name="Maruyama M."/>
            <person name="Yoshitake H."/>
            <person name="Tsukamoto H."/>
            <person name="Takamori K."/>
            <person name="Araki Y."/>
        </authorList>
    </citation>
    <scope>TISSUE SPECIFICITY</scope>
    <scope>DEVELOPMENTAL STAGE</scope>
</reference>
<reference key="5">
    <citation type="journal article" date="2010" name="Cell">
        <title>A tissue-specific atlas of mouse protein phosphorylation and expression.</title>
        <authorList>
            <person name="Huttlin E.L."/>
            <person name="Jedrychowski M.P."/>
            <person name="Elias J.E."/>
            <person name="Goswami T."/>
            <person name="Rad R."/>
            <person name="Beausoleil S.A."/>
            <person name="Villen J."/>
            <person name="Haas W."/>
            <person name="Sowa M.E."/>
            <person name="Gygi S.P."/>
        </authorList>
    </citation>
    <scope>IDENTIFICATION BY MASS SPECTROMETRY [LARGE SCALE ANALYSIS]</scope>
    <source>
        <tissue>Testis</tissue>
    </source>
</reference>
<reference key="6">
    <citation type="journal article" date="2014" name="Biol. Reprod.">
        <title>GPI-anchored protein complex, LY6K/TEX101, is required for sperm migration into the oviduct and male fertility in mice.</title>
        <authorList>
            <person name="Fujihara Y."/>
            <person name="Okabe M."/>
            <person name="Ikawa M."/>
        </authorList>
    </citation>
    <scope>TISSUE SPECIFICITY</scope>
    <scope>INTERACTION WITH ADAM3 AND TEX101</scope>
    <scope>DISRUPTION PHENOTYPE</scope>
    <scope>FUNCTION</scope>
</reference>
<reference key="7">
    <citation type="journal article" date="2016" name="Sci. Rep.">
        <title>TEX101, a glycoprotein essential for sperm fertility, is required for stable expression of Ly6k on testicular germ cells.</title>
        <authorList>
            <person name="Endo S."/>
            <person name="Yoshitake H."/>
            <person name="Tsukamoto H."/>
            <person name="Matsuura H."/>
            <person name="Kato K."/>
            <person name="Sakuraba M."/>
            <person name="Takamori K."/>
            <person name="Fujiwara H."/>
            <person name="Takeda S."/>
            <person name="Araki Y."/>
        </authorList>
    </citation>
    <scope>TISSUE SPECIFICITY</scope>
    <scope>SUBCELLULAR LOCATION</scope>
</reference>
<organism>
    <name type="scientific">Mus musculus</name>
    <name type="common">Mouse</name>
    <dbReference type="NCBI Taxonomy" id="10090"/>
    <lineage>
        <taxon>Eukaryota</taxon>
        <taxon>Metazoa</taxon>
        <taxon>Chordata</taxon>
        <taxon>Craniata</taxon>
        <taxon>Vertebrata</taxon>
        <taxon>Euteleostomi</taxon>
        <taxon>Mammalia</taxon>
        <taxon>Eutheria</taxon>
        <taxon>Euarchontoglires</taxon>
        <taxon>Glires</taxon>
        <taxon>Rodentia</taxon>
        <taxon>Myomorpha</taxon>
        <taxon>Muroidea</taxon>
        <taxon>Muridae</taxon>
        <taxon>Murinae</taxon>
        <taxon>Mus</taxon>
        <taxon>Mus</taxon>
    </lineage>
</organism>
<proteinExistence type="evidence at protein level"/>
<dbReference type="EMBL" id="AK010485">
    <property type="protein sequence ID" value="BAB26976.1"/>
    <property type="molecule type" value="mRNA"/>
</dbReference>
<dbReference type="EMBL" id="BC049723">
    <property type="protein sequence ID" value="AAH49723.1"/>
    <property type="molecule type" value="mRNA"/>
</dbReference>
<dbReference type="CCDS" id="CCDS27532.1"/>
<dbReference type="RefSeq" id="NP_083903.1">
    <property type="nucleotide sequence ID" value="NM_029627.2"/>
</dbReference>
<dbReference type="SMR" id="Q9CWP4"/>
<dbReference type="FunCoup" id="Q9CWP4">
    <property type="interactions" value="13"/>
</dbReference>
<dbReference type="STRING" id="10090.ENSMUSP00000052599"/>
<dbReference type="iPTMnet" id="Q9CWP4"/>
<dbReference type="PhosphoSitePlus" id="Q9CWP4"/>
<dbReference type="SwissPalm" id="Q9CWP4"/>
<dbReference type="PaxDb" id="10090-ENSMUSP00000052599"/>
<dbReference type="ProteomicsDB" id="295732"/>
<dbReference type="Antibodypedia" id="3032">
    <property type="antibodies" value="111 antibodies from 27 providers"/>
</dbReference>
<dbReference type="DNASU" id="76486"/>
<dbReference type="Ensembl" id="ENSMUST00000060301.6">
    <property type="protein sequence ID" value="ENSMUSP00000052599.6"/>
    <property type="gene ID" value="ENSMUSG00000044678.12"/>
</dbReference>
<dbReference type="Ensembl" id="ENSMUST00000168815.8">
    <property type="protein sequence ID" value="ENSMUSP00000132129.2"/>
    <property type="gene ID" value="ENSMUSG00000044678.12"/>
</dbReference>
<dbReference type="GeneID" id="76486"/>
<dbReference type="KEGG" id="mmu:76486"/>
<dbReference type="UCSC" id="uc007wga.1">
    <property type="organism name" value="mouse"/>
</dbReference>
<dbReference type="AGR" id="MGI:1923736"/>
<dbReference type="CTD" id="54742"/>
<dbReference type="MGI" id="MGI:1923736">
    <property type="gene designation" value="Ly6k"/>
</dbReference>
<dbReference type="VEuPathDB" id="HostDB:ENSMUSG00000044678"/>
<dbReference type="eggNOG" id="ENOG502TDVS">
    <property type="taxonomic scope" value="Eukaryota"/>
</dbReference>
<dbReference type="GeneTree" id="ENSGT00940000159966"/>
<dbReference type="HOGENOM" id="CLU_105666_0_0_1"/>
<dbReference type="InParanoid" id="Q9CWP4"/>
<dbReference type="OrthoDB" id="9617216at2759"/>
<dbReference type="PhylomeDB" id="Q9CWP4"/>
<dbReference type="TreeFam" id="TF336908"/>
<dbReference type="Reactome" id="R-MMU-163125">
    <property type="pathway name" value="Post-translational modification: synthesis of GPI-anchored proteins"/>
</dbReference>
<dbReference type="BioGRID-ORCS" id="76486">
    <property type="hits" value="2 hits in 78 CRISPR screens"/>
</dbReference>
<dbReference type="PRO" id="PR:Q9CWP4"/>
<dbReference type="Proteomes" id="UP000000589">
    <property type="component" value="Chromosome 15"/>
</dbReference>
<dbReference type="RNAct" id="Q9CWP4">
    <property type="molecule type" value="protein"/>
</dbReference>
<dbReference type="Bgee" id="ENSMUSG00000044678">
    <property type="expression patterns" value="Expressed in spermatocyte and 73 other cell types or tissues"/>
</dbReference>
<dbReference type="GO" id="GO:0001669">
    <property type="term" value="C:acrosomal vesicle"/>
    <property type="evidence" value="ECO:0000314"/>
    <property type="project" value="UniProtKB"/>
</dbReference>
<dbReference type="GO" id="GO:0009986">
    <property type="term" value="C:cell surface"/>
    <property type="evidence" value="ECO:0000314"/>
    <property type="project" value="MGI"/>
</dbReference>
<dbReference type="GO" id="GO:0005737">
    <property type="term" value="C:cytoplasm"/>
    <property type="evidence" value="ECO:0000314"/>
    <property type="project" value="MGI"/>
</dbReference>
<dbReference type="GO" id="GO:0005576">
    <property type="term" value="C:extracellular region"/>
    <property type="evidence" value="ECO:0007669"/>
    <property type="project" value="UniProtKB-SubCell"/>
</dbReference>
<dbReference type="GO" id="GO:0045121">
    <property type="term" value="C:membrane raft"/>
    <property type="evidence" value="ECO:0007669"/>
    <property type="project" value="UniProtKB-SubCell"/>
</dbReference>
<dbReference type="GO" id="GO:0005886">
    <property type="term" value="C:plasma membrane"/>
    <property type="evidence" value="ECO:0000314"/>
    <property type="project" value="UniProtKB"/>
</dbReference>
<dbReference type="GO" id="GO:0098552">
    <property type="term" value="C:side of membrane"/>
    <property type="evidence" value="ECO:0007669"/>
    <property type="project" value="UniProtKB-KW"/>
</dbReference>
<dbReference type="GO" id="GO:0007339">
    <property type="term" value="P:binding of sperm to zona pellucida"/>
    <property type="evidence" value="ECO:0000315"/>
    <property type="project" value="MGI"/>
</dbReference>
<dbReference type="GO" id="GO:0030317">
    <property type="term" value="P:flagellated sperm motility"/>
    <property type="evidence" value="ECO:0000315"/>
    <property type="project" value="MGI"/>
</dbReference>
<dbReference type="CDD" id="cd23550">
    <property type="entry name" value="TFP_LU_ECD_Ly6K"/>
    <property type="match status" value="1"/>
</dbReference>
<dbReference type="Gene3D" id="2.10.60.10">
    <property type="entry name" value="CD59"/>
    <property type="match status" value="1"/>
</dbReference>
<dbReference type="InterPro" id="IPR016054">
    <property type="entry name" value="LY6_UPA_recep-like"/>
</dbReference>
<dbReference type="InterPro" id="IPR045860">
    <property type="entry name" value="Snake_toxin-like_sf"/>
</dbReference>
<dbReference type="InterPro" id="IPR052874">
    <property type="entry name" value="Sperm-ZP_regulatory"/>
</dbReference>
<dbReference type="PANTHER" id="PTHR15049">
    <property type="entry name" value="GLYCOSYL-PHOSPHATIDYLINOSITOL-ANCHORED MOLECULE-LIKE PROTEIN-RELATED"/>
    <property type="match status" value="1"/>
</dbReference>
<dbReference type="PANTHER" id="PTHR15049:SF1">
    <property type="entry name" value="LYMPHOCYTE ANTIGEN 6K"/>
    <property type="match status" value="1"/>
</dbReference>
<dbReference type="Pfam" id="PF00021">
    <property type="entry name" value="UPAR_LY6"/>
    <property type="match status" value="1"/>
</dbReference>
<dbReference type="SMART" id="SM00134">
    <property type="entry name" value="LU"/>
    <property type="match status" value="1"/>
</dbReference>
<dbReference type="SUPFAM" id="SSF57302">
    <property type="entry name" value="Snake toxin-like"/>
    <property type="match status" value="1"/>
</dbReference>
<keyword id="KW-1003">Cell membrane</keyword>
<keyword id="KW-0963">Cytoplasm</keyword>
<keyword id="KW-0968">Cytoplasmic vesicle</keyword>
<keyword id="KW-0325">Glycoprotein</keyword>
<keyword id="KW-0336">GPI-anchor</keyword>
<keyword id="KW-0449">Lipoprotein</keyword>
<keyword id="KW-0472">Membrane</keyword>
<keyword id="KW-1185">Reference proteome</keyword>
<keyword id="KW-0964">Secreted</keyword>
<keyword id="KW-0732">Signal</keyword>
<protein>
    <recommendedName>
        <fullName evidence="2">Lymphocyte antigen 6K</fullName>
        <shortName evidence="2">Ly-6K</shortName>
    </recommendedName>
</protein>
<comment type="function">
    <text evidence="2 6">Required for sperm migration into the oviduct and male fertility by controlling binding of sperm to zona pellucida (PubMed:24501175). May play a role in cell growth (By similarity).</text>
</comment>
<comment type="subunit">
    <text evidence="4 6">Interacts with ADAM3 and TEX101.</text>
</comment>
<comment type="subcellular location">
    <subcellularLocation>
        <location evidence="1">Secreted</location>
    </subcellularLocation>
    <subcellularLocation>
        <location evidence="1">Cytoplasm</location>
    </subcellularLocation>
    <subcellularLocation>
        <location evidence="7">Cell membrane</location>
        <topology evidence="8">Lipid-anchor</topology>
        <topology evidence="8">GPI-anchor</topology>
    </subcellularLocation>
    <subcellularLocation>
        <location evidence="7">Cytoplasmic vesicle</location>
        <location evidence="7">Secretory vesicle</location>
        <location evidence="7">Acrosome</location>
    </subcellularLocation>
    <subcellularLocation>
        <location evidence="4">Membrane raft</location>
    </subcellularLocation>
</comment>
<comment type="tissue specificity">
    <text evidence="5 6 7">Strongly expressed in testes and weakly expressed in the epididymis, ovary, and uterus (PubMed:20920470). Expressed in testicular germ cells (TGCs) (PubMed:24501175). Expressed in the testicular seminiferous tubules, in spermatocytes, spermatids, and testicular spermatozoa (PubMed:27005865).</text>
</comment>
<comment type="developmental stage">
    <text evidence="5">Weakly expressed in testes from 18 day postcoitus to 1 day postpartum (dpp), with a plateau starting around 8 dpp; and testicular expression shows two-peak expression at around 14 dpp and 24 dpp, then exhibits stable expression from 6-week after birth onward.</text>
</comment>
<comment type="disruption phenotype">
    <text evidence="6">Knockout Ly6k mice are viable and show no overt developmental abnormalities. Males are infertile.</text>
</comment>
<accession>Q9CWP4</accession>